<proteinExistence type="evidence at protein level"/>
<gene>
    <name type="primary">outM</name>
</gene>
<keyword id="KW-0997">Cell inner membrane</keyword>
<keyword id="KW-1003">Cell membrane</keyword>
<keyword id="KW-0472">Membrane</keyword>
<keyword id="KW-0653">Protein transport</keyword>
<keyword id="KW-0812">Transmembrane</keyword>
<keyword id="KW-1133">Transmembrane helix</keyword>
<keyword id="KW-0813">Transport</keyword>
<comment type="function">
    <text evidence="1 5">Inner membrane component of the type II secretion system required for the energy-dependent secretion of extracellular factors such as proteases and toxins from the periplasm. Plays a role in the complex assembly and recruits OutL resulting in a stable complex in the inner membrane (By similarity). Provides thus a link between the energy-providing OutE protein in the cytoplasm and the rest of the T2SS machinery (PubMed:11266368).</text>
</comment>
<comment type="subunit">
    <text evidence="1 2 3 5">Type II secretion system is composed of four main components: the outer membrane complex, the inner membrane complex, the cytoplasmic secretion ATPase and the periplasm-spanning pseudopilus (By similarity). Forms homodimers (By similarity). Interacts with OutL/GspL (PubMed:11266368). Interacts with OutE/GspE and OutF/GspF (By similarity).</text>
</comment>
<comment type="subcellular location">
    <subcellularLocation>
        <location evidence="1">Cell inner membrane</location>
        <topology evidence="1">Single-pass membrane protein</topology>
    </subcellularLocation>
</comment>
<comment type="similarity">
    <text evidence="6">Belongs to the GSP M family.</text>
</comment>
<organism>
    <name type="scientific">Dickeya chrysanthemi</name>
    <name type="common">Pectobacterium chrysanthemi</name>
    <name type="synonym">Erwinia chrysanthemi</name>
    <dbReference type="NCBI Taxonomy" id="556"/>
    <lineage>
        <taxon>Bacteria</taxon>
        <taxon>Pseudomonadati</taxon>
        <taxon>Pseudomonadota</taxon>
        <taxon>Gammaproteobacteria</taxon>
        <taxon>Enterobacterales</taxon>
        <taxon>Pectobacteriaceae</taxon>
        <taxon>Dickeya</taxon>
    </lineage>
</organism>
<protein>
    <recommendedName>
        <fullName>Type II secretion system protein M</fullName>
        <shortName>T2SS protein M</shortName>
    </recommendedName>
    <alternativeName>
        <fullName>General secretion pathway protein M</fullName>
    </alternativeName>
    <alternativeName>
        <fullName>Pectic enzymes secretion protein OutM</fullName>
    </alternativeName>
</protein>
<name>GSPM_DICCH</name>
<reference key="1">
    <citation type="journal article" date="1992" name="J. Bacteriol.">
        <title>Analysis of eight out genes in a cluster required for pectic enzyme secretion by Erwinia chrysanthemi: sequence comparison with secretion genes from other Gram-negative bacteria.</title>
        <authorList>
            <person name="Lindeberg M."/>
            <person name="Collmer A."/>
        </authorList>
    </citation>
    <scope>NUCLEOTIDE SEQUENCE [GENOMIC DNA]</scope>
    <source>
        <strain>EC16</strain>
    </source>
</reference>
<reference key="2">
    <citation type="journal article" date="2001" name="EMBO Rep.">
        <title>An inner membrane platform in the type II secretion machinery of Gram-negative bacteria.</title>
        <authorList>
            <person name="Py B."/>
            <person name="Loiseau L."/>
            <person name="Barras F."/>
        </authorList>
    </citation>
    <scope>INTERACTION WITH OUTL/GSPL</scope>
    <scope>FUNCTION</scope>
</reference>
<feature type="chain" id="PRO_0000207325" description="Type II secretion system protein M">
    <location>
        <begin position="1"/>
        <end position="161"/>
    </location>
</feature>
<feature type="topological domain" description="Cytoplasmic" evidence="1">
    <location>
        <begin position="1"/>
        <end position="16"/>
    </location>
</feature>
<feature type="transmembrane region" description="Helical" evidence="4">
    <location>
        <begin position="17"/>
        <end position="37"/>
    </location>
</feature>
<feature type="topological domain" description="Periplasmic" evidence="1">
    <location>
        <begin position="38"/>
        <end position="161"/>
    </location>
</feature>
<evidence type="ECO:0000250" key="1">
    <source>
        <dbReference type="UniProtKB" id="P25061"/>
    </source>
</evidence>
<evidence type="ECO:0000250" key="2">
    <source>
        <dbReference type="UniProtKB" id="P41851"/>
    </source>
</evidence>
<evidence type="ECO:0000250" key="3">
    <source>
        <dbReference type="UniProtKB" id="Q00514"/>
    </source>
</evidence>
<evidence type="ECO:0000255" key="4"/>
<evidence type="ECO:0000269" key="5">
    <source>
    </source>
</evidence>
<evidence type="ECO:0000305" key="6"/>
<sequence length="161" mass="18622">MNELRRRWQVMSQRERLMALACGGLVVLCLLYYLIWAPWQESVRQWQMTVERERQTVRWMQQQPPRFRRRKVRGGRXPVAISANGIGAQSAVRYGITVLRMQPQESQVSVTLARSDFNNLLHWLAELEQKNGVITQGIDVTAVPNSPGIVEVTRLSLERVL</sequence>
<accession>Q47422</accession>
<dbReference type="EMBL" id="L02214">
    <property type="protein sequence ID" value="AAA24840.1"/>
    <property type="molecule type" value="Genomic_DNA"/>
</dbReference>
<dbReference type="PIR" id="B47755">
    <property type="entry name" value="B47755"/>
</dbReference>
<dbReference type="GO" id="GO:0005886">
    <property type="term" value="C:plasma membrane"/>
    <property type="evidence" value="ECO:0007669"/>
    <property type="project" value="UniProtKB-SubCell"/>
</dbReference>
<dbReference type="GO" id="GO:0015627">
    <property type="term" value="C:type II protein secretion system complex"/>
    <property type="evidence" value="ECO:0007669"/>
    <property type="project" value="InterPro"/>
</dbReference>
<dbReference type="GO" id="GO:0015628">
    <property type="term" value="P:protein secretion by the type II secretion system"/>
    <property type="evidence" value="ECO:0007669"/>
    <property type="project" value="InterPro"/>
</dbReference>
<dbReference type="Gene3D" id="3.30.1360.100">
    <property type="entry name" value="General secretion pathway protein M, EpsM"/>
    <property type="match status" value="1"/>
</dbReference>
<dbReference type="InterPro" id="IPR007690">
    <property type="entry name" value="T2SS_GspM"/>
</dbReference>
<dbReference type="InterPro" id="IPR023229">
    <property type="entry name" value="T2SS_M_periplasmic_sf"/>
</dbReference>
<dbReference type="Pfam" id="PF04612">
    <property type="entry name" value="T2SSM"/>
    <property type="match status" value="1"/>
</dbReference>
<dbReference type="PIRSF" id="PIRSF006291">
    <property type="entry name" value="GspM"/>
    <property type="match status" value="1"/>
</dbReference>
<dbReference type="SUPFAM" id="SSF103054">
    <property type="entry name" value="General secretion pathway protein M, EpsM"/>
    <property type="match status" value="1"/>
</dbReference>